<evidence type="ECO:0000255" key="1">
    <source>
        <dbReference type="HAMAP-Rule" id="MF_01416"/>
    </source>
</evidence>
<evidence type="ECO:0000305" key="2"/>
<gene>
    <name evidence="1" type="primary">atpH</name>
    <name evidence="1" type="synonym">atpD</name>
</gene>
<sequence length="184" mass="20348">MQTTIRGELVEPYAEALLSLAQSHNLADQFQQDSGLILDLLAASAELQEFLANPLINPDAKKNVLRQLTVDKVHGYFLNFLMLLVDRRRINLLAAICQQYRALLRKLRNIVLAEVISAVELTEQQRHAVVEKVKTMTGAADVELAIAIDPELLGGVVIKVGSQIFDASLRGQLRRLSVSLAQPV</sequence>
<reference key="1">
    <citation type="journal article" date="1993" name="Biochem. J.">
        <title>Organization and sequences of genes for the subunits of ATP synthase in the thermophilic cyanobacterium Synechococcus 6716.</title>
        <authorList>
            <person name="van Walraven H.S."/>
            <person name="Lutter R."/>
            <person name="Walker J.E."/>
        </authorList>
    </citation>
    <scope>NUCLEOTIDE SEQUENCE [GENOMIC DNA]</scope>
    <scope>PROTEIN SEQUENCE OF 1-11</scope>
</reference>
<accession>Q05374</accession>
<name>ATPD_SYNP1</name>
<organism>
    <name type="scientific">Synechococcus sp. (strain PCC 6716)</name>
    <dbReference type="NCBI Taxonomy" id="32048"/>
    <lineage>
        <taxon>Bacteria</taxon>
        <taxon>Bacillati</taxon>
        <taxon>Cyanobacteriota</taxon>
        <taxon>Cyanophyceae</taxon>
        <taxon>Synechococcales</taxon>
        <taxon>Synechococcaceae</taxon>
        <taxon>Synechococcus</taxon>
    </lineage>
</organism>
<protein>
    <recommendedName>
        <fullName evidence="1">ATP synthase subunit delta</fullName>
    </recommendedName>
    <alternativeName>
        <fullName evidence="1">ATP synthase F(1) sector subunit delta</fullName>
    </alternativeName>
    <alternativeName>
        <fullName evidence="1">F-type ATPase subunit delta</fullName>
        <shortName evidence="1">F-ATPase subunit delta</shortName>
    </alternativeName>
</protein>
<dbReference type="EMBL" id="X70431">
    <property type="protein sequence ID" value="CAA49874.1"/>
    <property type="status" value="ALT_INIT"/>
    <property type="molecule type" value="Genomic_DNA"/>
</dbReference>
<dbReference type="PIR" id="S36964">
    <property type="entry name" value="S36964"/>
</dbReference>
<dbReference type="SMR" id="Q05374"/>
<dbReference type="GO" id="GO:0031676">
    <property type="term" value="C:plasma membrane-derived thylakoid membrane"/>
    <property type="evidence" value="ECO:0007669"/>
    <property type="project" value="UniProtKB-SubCell"/>
</dbReference>
<dbReference type="GO" id="GO:0045259">
    <property type="term" value="C:proton-transporting ATP synthase complex"/>
    <property type="evidence" value="ECO:0007669"/>
    <property type="project" value="UniProtKB-KW"/>
</dbReference>
<dbReference type="GO" id="GO:0046933">
    <property type="term" value="F:proton-transporting ATP synthase activity, rotational mechanism"/>
    <property type="evidence" value="ECO:0007669"/>
    <property type="project" value="UniProtKB-UniRule"/>
</dbReference>
<dbReference type="Gene3D" id="1.10.520.20">
    <property type="entry name" value="N-terminal domain of the delta subunit of the F1F0-ATP synthase"/>
    <property type="match status" value="1"/>
</dbReference>
<dbReference type="HAMAP" id="MF_01416">
    <property type="entry name" value="ATP_synth_delta_bact"/>
    <property type="match status" value="1"/>
</dbReference>
<dbReference type="InterPro" id="IPR026015">
    <property type="entry name" value="ATP_synth_OSCP/delta_N_sf"/>
</dbReference>
<dbReference type="InterPro" id="IPR020781">
    <property type="entry name" value="ATPase_OSCP/d_CS"/>
</dbReference>
<dbReference type="InterPro" id="IPR000711">
    <property type="entry name" value="ATPase_OSCP/dsu"/>
</dbReference>
<dbReference type="NCBIfam" id="TIGR01145">
    <property type="entry name" value="ATP_synt_delta"/>
    <property type="match status" value="1"/>
</dbReference>
<dbReference type="PANTHER" id="PTHR11910">
    <property type="entry name" value="ATP SYNTHASE DELTA CHAIN"/>
    <property type="match status" value="1"/>
</dbReference>
<dbReference type="Pfam" id="PF00213">
    <property type="entry name" value="OSCP"/>
    <property type="match status" value="1"/>
</dbReference>
<dbReference type="PRINTS" id="PR00125">
    <property type="entry name" value="ATPASEDELTA"/>
</dbReference>
<dbReference type="SUPFAM" id="SSF47928">
    <property type="entry name" value="N-terminal domain of the delta subunit of the F1F0-ATP synthase"/>
    <property type="match status" value="1"/>
</dbReference>
<dbReference type="PROSITE" id="PS00389">
    <property type="entry name" value="ATPASE_DELTA"/>
    <property type="match status" value="1"/>
</dbReference>
<proteinExistence type="evidence at protein level"/>
<comment type="function">
    <text evidence="1">F(1)F(0) ATP synthase produces ATP from ADP in the presence of a proton or sodium gradient. F-type ATPases consist of two structural domains, F(1) containing the extramembraneous catalytic core and F(0) containing the membrane proton channel, linked together by a central stalk and a peripheral stalk. During catalysis, ATP synthesis in the catalytic domain of F(1) is coupled via a rotary mechanism of the central stalk subunits to proton translocation.</text>
</comment>
<comment type="function">
    <text evidence="1">This protein is part of the stalk that links CF(0) to CF(1). It either transmits conformational changes from CF(0) to CF(1) or is implicated in proton conduction.</text>
</comment>
<comment type="subunit">
    <text evidence="1">F-type ATPases have 2 components, F(1) - the catalytic core - and F(0) - the membrane proton channel. F(1) has five subunits: alpha(3), beta(3), gamma(1), delta(1), epsilon(1). CF(0) has four main subunits: a(1), b(1), b'(1) and c(10-14). The alpha and beta chains form an alternating ring which encloses part of the gamma chain. F(1) is attached to F(0) by a central stalk formed by the gamma and epsilon chains, while a peripheral stalk is formed by the delta, b and b' chains.</text>
</comment>
<comment type="subcellular location">
    <subcellularLocation>
        <location evidence="1">Cellular thylakoid membrane</location>
        <topology evidence="1">Peripheral membrane protein</topology>
    </subcellularLocation>
</comment>
<comment type="similarity">
    <text evidence="1">Belongs to the ATPase delta chain family.</text>
</comment>
<comment type="sequence caution" evidence="2">
    <conflict type="erroneous initiation">
        <sequence resource="EMBL-CDS" id="CAA49874"/>
    </conflict>
</comment>
<keyword id="KW-0066">ATP synthesis</keyword>
<keyword id="KW-0139">CF(1)</keyword>
<keyword id="KW-0903">Direct protein sequencing</keyword>
<keyword id="KW-0375">Hydrogen ion transport</keyword>
<keyword id="KW-0406">Ion transport</keyword>
<keyword id="KW-0472">Membrane</keyword>
<keyword id="KW-0793">Thylakoid</keyword>
<keyword id="KW-0813">Transport</keyword>
<feature type="chain" id="PRO_0000193493" description="ATP synthase subunit delta">
    <location>
        <begin position="1"/>
        <end position="184"/>
    </location>
</feature>